<name>Y4845_ARATH</name>
<organism>
    <name type="scientific">Arabidopsis thaliana</name>
    <name type="common">Mouse-ear cress</name>
    <dbReference type="NCBI Taxonomy" id="3702"/>
    <lineage>
        <taxon>Eukaryota</taxon>
        <taxon>Viridiplantae</taxon>
        <taxon>Streptophyta</taxon>
        <taxon>Embryophyta</taxon>
        <taxon>Tracheophyta</taxon>
        <taxon>Spermatophyta</taxon>
        <taxon>Magnoliopsida</taxon>
        <taxon>eudicotyledons</taxon>
        <taxon>Gunneridae</taxon>
        <taxon>Pentapetalae</taxon>
        <taxon>rosids</taxon>
        <taxon>malvids</taxon>
        <taxon>Brassicales</taxon>
        <taxon>Brassicaceae</taxon>
        <taxon>Camelineae</taxon>
        <taxon>Arabidopsis</taxon>
    </lineage>
</organism>
<comment type="function">
    <text>May act as a substrate-specific adapter of an E3 ubiquitin-protein ligase complex (CUL3-RBX1-BTB) which mediates the ubiquitination and subsequent proteasomal degradation of target proteins.</text>
</comment>
<comment type="pathway">
    <text>Protein modification; protein ubiquitination.</text>
</comment>
<comment type="subunit">
    <text evidence="3">Interacts with CUL3A and CUL3B.</text>
</comment>
<comment type="interaction">
    <interactant intactId="EBI-630062">
        <id>Q6DBN1</id>
    </interactant>
    <interactant intactId="EBI-15192335">
        <id>C0SUW7</id>
        <label>ARID6</label>
    </interactant>
    <organismsDiffer>false</organismsDiffer>
    <experiments>3</experiments>
</comment>
<comment type="domain">
    <text evidence="3">The BTB/POZ domain mediates the interaction with some component of ubiquitin ligase complexes.</text>
</comment>
<comment type="sequence caution" evidence="4">
    <conflict type="erroneous gene model prediction">
        <sequence resource="EMBL-CDS" id="AAC28195"/>
    </conflict>
</comment>
<evidence type="ECO:0000255" key="1"/>
<evidence type="ECO:0000255" key="2">
    <source>
        <dbReference type="PROSITE-ProRule" id="PRU00037"/>
    </source>
</evidence>
<evidence type="ECO:0000269" key="3">
    <source>
    </source>
</evidence>
<evidence type="ECO:0000305" key="4"/>
<gene>
    <name type="ordered locus">At4g08455</name>
    <name type="ORF">T15F16.14</name>
</gene>
<protein>
    <recommendedName>
        <fullName>BTB/POZ domain-containing protein At4g08455</fullName>
    </recommendedName>
</protein>
<dbReference type="EMBL" id="AF076275">
    <property type="protein sequence ID" value="AAC28195.1"/>
    <property type="status" value="ALT_SEQ"/>
    <property type="molecule type" value="Genomic_DNA"/>
</dbReference>
<dbReference type="EMBL" id="AL161511">
    <property type="status" value="NOT_ANNOTATED_CDS"/>
    <property type="molecule type" value="Genomic_DNA"/>
</dbReference>
<dbReference type="EMBL" id="CP002687">
    <property type="status" value="NOT_ANNOTATED_CDS"/>
    <property type="molecule type" value="Genomic_DNA"/>
</dbReference>
<dbReference type="EMBL" id="BT014991">
    <property type="protein sequence ID" value="AAT70442.1"/>
    <property type="molecule type" value="mRNA"/>
</dbReference>
<dbReference type="EMBL" id="BT020344">
    <property type="protein sequence ID" value="AAV85699.1"/>
    <property type="molecule type" value="mRNA"/>
</dbReference>
<dbReference type="PIR" id="T01838">
    <property type="entry name" value="T01838"/>
</dbReference>
<dbReference type="SMR" id="Q6DBN1"/>
<dbReference type="BioGRID" id="11704">
    <property type="interactions" value="4"/>
</dbReference>
<dbReference type="FunCoup" id="Q6DBN1">
    <property type="interactions" value="147"/>
</dbReference>
<dbReference type="IntAct" id="Q6DBN1">
    <property type="interactions" value="4"/>
</dbReference>
<dbReference type="STRING" id="3702.Q6DBN1"/>
<dbReference type="PaxDb" id="3702-AT4G08455.1"/>
<dbReference type="ProteomicsDB" id="243040"/>
<dbReference type="DNASU" id="826404"/>
<dbReference type="Araport" id="AT4G08455"/>
<dbReference type="TAIR" id="AT4G08455"/>
<dbReference type="eggNOG" id="KOG1987">
    <property type="taxonomic scope" value="Eukaryota"/>
</dbReference>
<dbReference type="HOGENOM" id="CLU_1095636_0_0_1"/>
<dbReference type="InParanoid" id="Q6DBN1"/>
<dbReference type="PhylomeDB" id="Q6DBN1"/>
<dbReference type="UniPathway" id="UPA00143"/>
<dbReference type="PRO" id="PR:Q6DBN1"/>
<dbReference type="Proteomes" id="UP000006548">
    <property type="component" value="Chromosome 4"/>
</dbReference>
<dbReference type="ExpressionAtlas" id="Q6DBN1">
    <property type="expression patterns" value="baseline and differential"/>
</dbReference>
<dbReference type="GO" id="GO:0005737">
    <property type="term" value="C:cytoplasm"/>
    <property type="evidence" value="ECO:0000318"/>
    <property type="project" value="GO_Central"/>
</dbReference>
<dbReference type="GO" id="GO:0031625">
    <property type="term" value="F:ubiquitin protein ligase binding"/>
    <property type="evidence" value="ECO:0000318"/>
    <property type="project" value="GO_Central"/>
</dbReference>
<dbReference type="GO" id="GO:0043161">
    <property type="term" value="P:proteasome-mediated ubiquitin-dependent protein catabolic process"/>
    <property type="evidence" value="ECO:0000318"/>
    <property type="project" value="GO_Central"/>
</dbReference>
<dbReference type="GO" id="GO:0016567">
    <property type="term" value="P:protein ubiquitination"/>
    <property type="evidence" value="ECO:0007669"/>
    <property type="project" value="UniProtKB-UniPathway"/>
</dbReference>
<dbReference type="GO" id="GO:0030162">
    <property type="term" value="P:regulation of proteolysis"/>
    <property type="evidence" value="ECO:0000318"/>
    <property type="project" value="GO_Central"/>
</dbReference>
<dbReference type="CDD" id="cd14733">
    <property type="entry name" value="BACK"/>
    <property type="match status" value="1"/>
</dbReference>
<dbReference type="CDD" id="cd18186">
    <property type="entry name" value="BTB_POZ_ZBTB_KLHL-like"/>
    <property type="match status" value="1"/>
</dbReference>
<dbReference type="FunFam" id="1.25.40.420:FF:000026">
    <property type="entry name" value="BTB/POZ domain-containing protein"/>
    <property type="match status" value="1"/>
</dbReference>
<dbReference type="Gene3D" id="1.25.40.420">
    <property type="match status" value="1"/>
</dbReference>
<dbReference type="Gene3D" id="3.30.710.10">
    <property type="entry name" value="Potassium Channel Kv1.1, Chain A"/>
    <property type="match status" value="1"/>
</dbReference>
<dbReference type="InterPro" id="IPR000210">
    <property type="entry name" value="BTB/POZ_dom"/>
</dbReference>
<dbReference type="InterPro" id="IPR011333">
    <property type="entry name" value="SKP1/BTB/POZ_sf"/>
</dbReference>
<dbReference type="PANTHER" id="PTHR24413">
    <property type="entry name" value="SPECKLE-TYPE POZ PROTEIN"/>
    <property type="match status" value="1"/>
</dbReference>
<dbReference type="Pfam" id="PF00651">
    <property type="entry name" value="BTB"/>
    <property type="match status" value="1"/>
</dbReference>
<dbReference type="SMART" id="SM00225">
    <property type="entry name" value="BTB"/>
    <property type="match status" value="1"/>
</dbReference>
<dbReference type="SUPFAM" id="SSF54695">
    <property type="entry name" value="POZ domain"/>
    <property type="match status" value="1"/>
</dbReference>
<dbReference type="PROSITE" id="PS50097">
    <property type="entry name" value="BTB"/>
    <property type="match status" value="1"/>
</dbReference>
<reference key="1">
    <citation type="journal article" date="1999" name="Nature">
        <title>Sequence and analysis of chromosome 4 of the plant Arabidopsis thaliana.</title>
        <authorList>
            <person name="Mayer K.F.X."/>
            <person name="Schueller C."/>
            <person name="Wambutt R."/>
            <person name="Murphy G."/>
            <person name="Volckaert G."/>
            <person name="Pohl T."/>
            <person name="Duesterhoeft A."/>
            <person name="Stiekema W."/>
            <person name="Entian K.-D."/>
            <person name="Terryn N."/>
            <person name="Harris B."/>
            <person name="Ansorge W."/>
            <person name="Brandt P."/>
            <person name="Grivell L.A."/>
            <person name="Rieger M."/>
            <person name="Weichselgartner M."/>
            <person name="de Simone V."/>
            <person name="Obermaier B."/>
            <person name="Mache R."/>
            <person name="Mueller M."/>
            <person name="Kreis M."/>
            <person name="Delseny M."/>
            <person name="Puigdomenech P."/>
            <person name="Watson M."/>
            <person name="Schmidtheini T."/>
            <person name="Reichert B."/>
            <person name="Portetelle D."/>
            <person name="Perez-Alonso M."/>
            <person name="Boutry M."/>
            <person name="Bancroft I."/>
            <person name="Vos P."/>
            <person name="Hoheisel J."/>
            <person name="Zimmermann W."/>
            <person name="Wedler H."/>
            <person name="Ridley P."/>
            <person name="Langham S.-A."/>
            <person name="McCullagh B."/>
            <person name="Bilham L."/>
            <person name="Robben J."/>
            <person name="van der Schueren J."/>
            <person name="Grymonprez B."/>
            <person name="Chuang Y.-J."/>
            <person name="Vandenbussche F."/>
            <person name="Braeken M."/>
            <person name="Weltjens I."/>
            <person name="Voet M."/>
            <person name="Bastiaens I."/>
            <person name="Aert R."/>
            <person name="Defoor E."/>
            <person name="Weitzenegger T."/>
            <person name="Bothe G."/>
            <person name="Ramsperger U."/>
            <person name="Hilbert H."/>
            <person name="Braun M."/>
            <person name="Holzer E."/>
            <person name="Brandt A."/>
            <person name="Peters S."/>
            <person name="van Staveren M."/>
            <person name="Dirkse W."/>
            <person name="Mooijman P."/>
            <person name="Klein Lankhorst R."/>
            <person name="Rose M."/>
            <person name="Hauf J."/>
            <person name="Koetter P."/>
            <person name="Berneiser S."/>
            <person name="Hempel S."/>
            <person name="Feldpausch M."/>
            <person name="Lamberth S."/>
            <person name="Van den Daele H."/>
            <person name="De Keyser A."/>
            <person name="Buysshaert C."/>
            <person name="Gielen J."/>
            <person name="Villarroel R."/>
            <person name="De Clercq R."/>
            <person name="van Montagu M."/>
            <person name="Rogers J."/>
            <person name="Cronin A."/>
            <person name="Quail M.A."/>
            <person name="Bray-Allen S."/>
            <person name="Clark L."/>
            <person name="Doggett J."/>
            <person name="Hall S."/>
            <person name="Kay M."/>
            <person name="Lennard N."/>
            <person name="McLay K."/>
            <person name="Mayes R."/>
            <person name="Pettett A."/>
            <person name="Rajandream M.A."/>
            <person name="Lyne M."/>
            <person name="Benes V."/>
            <person name="Rechmann S."/>
            <person name="Borkova D."/>
            <person name="Bloecker H."/>
            <person name="Scharfe M."/>
            <person name="Grimm M."/>
            <person name="Loehnert T.-H."/>
            <person name="Dose S."/>
            <person name="de Haan M."/>
            <person name="Maarse A.C."/>
            <person name="Schaefer M."/>
            <person name="Mueller-Auer S."/>
            <person name="Gabel C."/>
            <person name="Fuchs M."/>
            <person name="Fartmann B."/>
            <person name="Granderath K."/>
            <person name="Dauner D."/>
            <person name="Herzl A."/>
            <person name="Neumann S."/>
            <person name="Argiriou A."/>
            <person name="Vitale D."/>
            <person name="Liguori R."/>
            <person name="Piravandi E."/>
            <person name="Massenet O."/>
            <person name="Quigley F."/>
            <person name="Clabauld G."/>
            <person name="Muendlein A."/>
            <person name="Felber R."/>
            <person name="Schnabl S."/>
            <person name="Hiller R."/>
            <person name="Schmidt W."/>
            <person name="Lecharny A."/>
            <person name="Aubourg S."/>
            <person name="Chefdor F."/>
            <person name="Cooke R."/>
            <person name="Berger C."/>
            <person name="Monfort A."/>
            <person name="Casacuberta E."/>
            <person name="Gibbons T."/>
            <person name="Weber N."/>
            <person name="Vandenbol M."/>
            <person name="Bargues M."/>
            <person name="Terol J."/>
            <person name="Torres A."/>
            <person name="Perez-Perez A."/>
            <person name="Purnelle B."/>
            <person name="Bent E."/>
            <person name="Johnson S."/>
            <person name="Tacon D."/>
            <person name="Jesse T."/>
            <person name="Heijnen L."/>
            <person name="Schwarz S."/>
            <person name="Scholler P."/>
            <person name="Heber S."/>
            <person name="Francs P."/>
            <person name="Bielke C."/>
            <person name="Frishman D."/>
            <person name="Haase D."/>
            <person name="Lemcke K."/>
            <person name="Mewes H.-W."/>
            <person name="Stocker S."/>
            <person name="Zaccaria P."/>
            <person name="Bevan M."/>
            <person name="Wilson R.K."/>
            <person name="de la Bastide M."/>
            <person name="Habermann K."/>
            <person name="Parnell L."/>
            <person name="Dedhia N."/>
            <person name="Gnoj L."/>
            <person name="Schutz K."/>
            <person name="Huang E."/>
            <person name="Spiegel L."/>
            <person name="Sekhon M."/>
            <person name="Murray J."/>
            <person name="Sheet P."/>
            <person name="Cordes M."/>
            <person name="Abu-Threideh J."/>
            <person name="Stoneking T."/>
            <person name="Kalicki J."/>
            <person name="Graves T."/>
            <person name="Harmon G."/>
            <person name="Edwards J."/>
            <person name="Latreille P."/>
            <person name="Courtney L."/>
            <person name="Cloud J."/>
            <person name="Abbott A."/>
            <person name="Scott K."/>
            <person name="Johnson D."/>
            <person name="Minx P."/>
            <person name="Bentley D."/>
            <person name="Fulton B."/>
            <person name="Miller N."/>
            <person name="Greco T."/>
            <person name="Kemp K."/>
            <person name="Kramer J."/>
            <person name="Fulton L."/>
            <person name="Mardis E."/>
            <person name="Dante M."/>
            <person name="Pepin K."/>
            <person name="Hillier L.W."/>
            <person name="Nelson J."/>
            <person name="Spieth J."/>
            <person name="Ryan E."/>
            <person name="Andrews S."/>
            <person name="Geisel C."/>
            <person name="Layman D."/>
            <person name="Du H."/>
            <person name="Ali J."/>
            <person name="Berghoff A."/>
            <person name="Jones K."/>
            <person name="Drone K."/>
            <person name="Cotton M."/>
            <person name="Joshu C."/>
            <person name="Antonoiu B."/>
            <person name="Zidanic M."/>
            <person name="Strong C."/>
            <person name="Sun H."/>
            <person name="Lamar B."/>
            <person name="Yordan C."/>
            <person name="Ma P."/>
            <person name="Zhong J."/>
            <person name="Preston R."/>
            <person name="Vil D."/>
            <person name="Shekher M."/>
            <person name="Matero A."/>
            <person name="Shah R."/>
            <person name="Swaby I.K."/>
            <person name="O'Shaughnessy A."/>
            <person name="Rodriguez M."/>
            <person name="Hoffman J."/>
            <person name="Till S."/>
            <person name="Granat S."/>
            <person name="Shohdy N."/>
            <person name="Hasegawa A."/>
            <person name="Hameed A."/>
            <person name="Lodhi M."/>
            <person name="Johnson A."/>
            <person name="Chen E."/>
            <person name="Marra M.A."/>
            <person name="Martienssen R."/>
            <person name="McCombie W.R."/>
        </authorList>
    </citation>
    <scope>NUCLEOTIDE SEQUENCE [LARGE SCALE GENOMIC DNA]</scope>
    <source>
        <strain>cv. Columbia</strain>
    </source>
</reference>
<reference key="2">
    <citation type="journal article" date="2017" name="Plant J.">
        <title>Araport11: a complete reannotation of the Arabidopsis thaliana reference genome.</title>
        <authorList>
            <person name="Cheng C.Y."/>
            <person name="Krishnakumar V."/>
            <person name="Chan A.P."/>
            <person name="Thibaud-Nissen F."/>
            <person name="Schobel S."/>
            <person name="Town C.D."/>
        </authorList>
    </citation>
    <scope>GENOME REANNOTATION</scope>
    <source>
        <strain>cv. Columbia</strain>
    </source>
</reference>
<reference key="3">
    <citation type="submission" date="2004-07" db="EMBL/GenBank/DDBJ databases">
        <title>Arabidopsis ORF clones.</title>
        <authorList>
            <person name="Kim C.J."/>
            <person name="Chen H."/>
            <person name="Cheuk R.F."/>
            <person name="Shinn P."/>
            <person name="Ecker J.R."/>
        </authorList>
    </citation>
    <scope>NUCLEOTIDE SEQUENCE [LARGE SCALE MRNA]</scope>
    <source>
        <strain>cv. Columbia</strain>
    </source>
</reference>
<reference key="4">
    <citation type="submission" date="2004-12" db="EMBL/GenBank/DDBJ databases">
        <title>Arabidopsis ORF clones.</title>
        <authorList>
            <person name="Cheuk R.F."/>
            <person name="Chen H."/>
            <person name="Kim C.J."/>
            <person name="Shinn P."/>
            <person name="Ecker J.R."/>
        </authorList>
    </citation>
    <scope>NUCLEOTIDE SEQUENCE [LARGE SCALE MRNA]</scope>
    <source>
        <strain>cv. Columbia</strain>
    </source>
</reference>
<reference key="5">
    <citation type="journal article" date="2005" name="J. Biol. Chem.">
        <title>Cullins 3a and 3b assemble with members of the broad complex/tramtrack/bric-a-brac (BTB) protein family to form essential ubiquitin-protein ligases (E3s) in Arabidopsis.</title>
        <authorList>
            <person name="Gingerich D.J."/>
            <person name="Gagne J.M."/>
            <person name="Salter D.W."/>
            <person name="Hellmann H."/>
            <person name="Estelle M."/>
            <person name="Ma L."/>
            <person name="Vierstra R.D."/>
        </authorList>
    </citation>
    <scope>DOMAIN BTB</scope>
    <scope>INTERACTION WITH CUL3A AND CUL3B</scope>
</reference>
<proteinExistence type="evidence at protein level"/>
<feature type="chain" id="PRO_0000406147" description="BTB/POZ domain-containing protein At4g08455">
    <location>
        <begin position="1"/>
        <end position="243"/>
    </location>
</feature>
<feature type="domain" description="BTB" evidence="2">
    <location>
        <begin position="64"/>
        <end position="136"/>
    </location>
</feature>
<feature type="coiled-coil region" evidence="1">
    <location>
        <begin position="19"/>
        <end position="51"/>
    </location>
</feature>
<sequence>MRCISCREEYLPRNAGTCKECYVEAGETEEELKREIDDLKAKVAFLRLSSSLDHGTSSTSRSFTDVVLIASEDNAGSPPIPAHKSVLVSRSPVFKAMLENEMEESLSGTIKISDVSYDALRTFVYYLYTAEACLDEQMACDLLVMSEKYQVKHLKSYCERFLVTKLSPDNSLMTYAFAHQHNAKHVLDAALSQIVENMDKLTKREEYMELVEKDPRLIVEIYEAYLSKQVNTAAGGTSTSKTS</sequence>
<accession>Q6DBN1</accession>
<accession>O81475</accession>
<keyword id="KW-0175">Coiled coil</keyword>
<keyword id="KW-1185">Reference proteome</keyword>
<keyword id="KW-0833">Ubl conjugation pathway</keyword>